<accession>Q07796</accession>
<accession>Q42861</accession>
<reference key="1">
    <citation type="journal article" date="1993" name="Plant Mol. Biol.">
        <title>Cloning and characterization of a cDNA encoding the cytosolic copper/zinc-superoxide dismutase from sweet potato tuberous root.</title>
        <authorList>
            <person name="Lin C.T."/>
            <person name="Yeh K.W."/>
            <person name="Kao M.C."/>
            <person name="Shaw J.F."/>
        </authorList>
    </citation>
    <scope>NUCLEOTIDE SEQUENCE [MRNA]</scope>
    <source>
        <tissue>Root</tissue>
    </source>
</reference>
<reference key="2">
    <citation type="journal article" date="1995" name="Plant Physiol.">
        <title>The gene structure of Cu/Zn-superoxide dismutase from sweet potato.</title>
        <authorList>
            <person name="Lin C.T."/>
            <person name="Lin M.T."/>
            <person name="Chen Y.T."/>
            <person name="Shaw J.F."/>
        </authorList>
    </citation>
    <scope>NUCLEOTIDE SEQUENCE [GENOMIC DNA]</scope>
    <source>
        <strain>cv. Tainong 57</strain>
        <tissue>Tuberous root</tissue>
    </source>
</reference>
<keyword id="KW-0049">Antioxidant</keyword>
<keyword id="KW-0186">Copper</keyword>
<keyword id="KW-0963">Cytoplasm</keyword>
<keyword id="KW-1015">Disulfide bond</keyword>
<keyword id="KW-0479">Metal-binding</keyword>
<keyword id="KW-0560">Oxidoreductase</keyword>
<keyword id="KW-0862">Zinc</keyword>
<protein>
    <recommendedName>
        <fullName>Superoxide dismutase [Cu-Zn]</fullName>
        <ecNumber>1.15.1.1</ecNumber>
    </recommendedName>
</protein>
<gene>
    <name type="primary">SODCC</name>
    <name type="synonym">SOD-15</name>
</gene>
<evidence type="ECO:0000250" key="1"/>
<evidence type="ECO:0000305" key="2"/>
<dbReference type="EC" id="1.15.1.1"/>
<dbReference type="EMBL" id="X73139">
    <property type="protein sequence ID" value="CAA51654.1"/>
    <property type="molecule type" value="mRNA"/>
</dbReference>
<dbReference type="EMBL" id="L36229">
    <property type="protein sequence ID" value="AAA88196.1"/>
    <property type="molecule type" value="Genomic_DNA"/>
</dbReference>
<dbReference type="PIR" id="S40404">
    <property type="entry name" value="S40404"/>
</dbReference>
<dbReference type="PIR" id="T10935">
    <property type="entry name" value="T10935"/>
</dbReference>
<dbReference type="SMR" id="Q07796"/>
<dbReference type="GO" id="GO:0005737">
    <property type="term" value="C:cytoplasm"/>
    <property type="evidence" value="ECO:0007669"/>
    <property type="project" value="UniProtKB-SubCell"/>
</dbReference>
<dbReference type="GO" id="GO:0005507">
    <property type="term" value="F:copper ion binding"/>
    <property type="evidence" value="ECO:0007669"/>
    <property type="project" value="InterPro"/>
</dbReference>
<dbReference type="GO" id="GO:0004784">
    <property type="term" value="F:superoxide dismutase activity"/>
    <property type="evidence" value="ECO:0007669"/>
    <property type="project" value="UniProtKB-EC"/>
</dbReference>
<dbReference type="CDD" id="cd00305">
    <property type="entry name" value="Cu-Zn_Superoxide_Dismutase"/>
    <property type="match status" value="1"/>
</dbReference>
<dbReference type="FunFam" id="2.60.40.200:FF:000001">
    <property type="entry name" value="Superoxide dismutase [Cu-Zn]"/>
    <property type="match status" value="1"/>
</dbReference>
<dbReference type="Gene3D" id="2.60.40.200">
    <property type="entry name" value="Superoxide dismutase, copper/zinc binding domain"/>
    <property type="match status" value="1"/>
</dbReference>
<dbReference type="InterPro" id="IPR036423">
    <property type="entry name" value="SOD-like_Cu/Zn_dom_sf"/>
</dbReference>
<dbReference type="InterPro" id="IPR024134">
    <property type="entry name" value="SOD_Cu/Zn_/chaperone"/>
</dbReference>
<dbReference type="InterPro" id="IPR018152">
    <property type="entry name" value="SOD_Cu/Zn_BS"/>
</dbReference>
<dbReference type="InterPro" id="IPR001424">
    <property type="entry name" value="SOD_Cu_Zn_dom"/>
</dbReference>
<dbReference type="PANTHER" id="PTHR10003">
    <property type="entry name" value="SUPEROXIDE DISMUTASE CU-ZN -RELATED"/>
    <property type="match status" value="1"/>
</dbReference>
<dbReference type="Pfam" id="PF00080">
    <property type="entry name" value="Sod_Cu"/>
    <property type="match status" value="1"/>
</dbReference>
<dbReference type="PRINTS" id="PR00068">
    <property type="entry name" value="CUZNDISMTASE"/>
</dbReference>
<dbReference type="SUPFAM" id="SSF49329">
    <property type="entry name" value="Cu,Zn superoxide dismutase-like"/>
    <property type="match status" value="1"/>
</dbReference>
<dbReference type="PROSITE" id="PS00087">
    <property type="entry name" value="SOD_CU_ZN_1"/>
    <property type="match status" value="1"/>
</dbReference>
<dbReference type="PROSITE" id="PS00332">
    <property type="entry name" value="SOD_CU_ZN_2"/>
    <property type="match status" value="1"/>
</dbReference>
<proteinExistence type="evidence at transcript level"/>
<name>SODC_IPOBA</name>
<organism>
    <name type="scientific">Ipomoea batatas</name>
    <name type="common">Sweet potato</name>
    <name type="synonym">Convolvulus batatas</name>
    <dbReference type="NCBI Taxonomy" id="4120"/>
    <lineage>
        <taxon>Eukaryota</taxon>
        <taxon>Viridiplantae</taxon>
        <taxon>Streptophyta</taxon>
        <taxon>Embryophyta</taxon>
        <taxon>Tracheophyta</taxon>
        <taxon>Spermatophyta</taxon>
        <taxon>Magnoliopsida</taxon>
        <taxon>eudicotyledons</taxon>
        <taxon>Gunneridae</taxon>
        <taxon>Pentapetalae</taxon>
        <taxon>asterids</taxon>
        <taxon>lamiids</taxon>
        <taxon>Solanales</taxon>
        <taxon>Convolvulaceae</taxon>
        <taxon>Ipomoeeae</taxon>
        <taxon>Ipomoea</taxon>
    </lineage>
</organism>
<feature type="initiator methionine" description="Removed" evidence="1">
    <location>
        <position position="1"/>
    </location>
</feature>
<feature type="chain" id="PRO_0000164138" description="Superoxide dismutase [Cu-Zn]">
    <location>
        <begin position="2"/>
        <end position="152"/>
    </location>
</feature>
<feature type="binding site" evidence="1">
    <location>
        <position position="45"/>
    </location>
    <ligand>
        <name>Cu cation</name>
        <dbReference type="ChEBI" id="CHEBI:23378"/>
        <note>catalytic</note>
    </ligand>
</feature>
<feature type="binding site" evidence="1">
    <location>
        <position position="47"/>
    </location>
    <ligand>
        <name>Cu cation</name>
        <dbReference type="ChEBI" id="CHEBI:23378"/>
        <note>catalytic</note>
    </ligand>
</feature>
<feature type="binding site" evidence="1">
    <location>
        <position position="62"/>
    </location>
    <ligand>
        <name>Cu cation</name>
        <dbReference type="ChEBI" id="CHEBI:23378"/>
        <note>catalytic</note>
    </ligand>
</feature>
<feature type="binding site" evidence="1">
    <location>
        <position position="62"/>
    </location>
    <ligand>
        <name>Zn(2+)</name>
        <dbReference type="ChEBI" id="CHEBI:29105"/>
        <note>structural</note>
    </ligand>
</feature>
<feature type="binding site" evidence="1">
    <location>
        <position position="70"/>
    </location>
    <ligand>
        <name>Zn(2+)</name>
        <dbReference type="ChEBI" id="CHEBI:29105"/>
        <note>structural</note>
    </ligand>
</feature>
<feature type="binding site" evidence="1">
    <location>
        <position position="79"/>
    </location>
    <ligand>
        <name>Zn(2+)</name>
        <dbReference type="ChEBI" id="CHEBI:29105"/>
        <note>structural</note>
    </ligand>
</feature>
<feature type="binding site" evidence="1">
    <location>
        <position position="82"/>
    </location>
    <ligand>
        <name>Zn(2+)</name>
        <dbReference type="ChEBI" id="CHEBI:29105"/>
        <note>structural</note>
    </ligand>
</feature>
<feature type="binding site" evidence="1">
    <location>
        <position position="119"/>
    </location>
    <ligand>
        <name>Cu cation</name>
        <dbReference type="ChEBI" id="CHEBI:23378"/>
        <note>catalytic</note>
    </ligand>
</feature>
<feature type="disulfide bond" evidence="1">
    <location>
        <begin position="56"/>
        <end position="145"/>
    </location>
</feature>
<feature type="sequence conflict" description="In Ref. 2; AAA88196." evidence="2" ref="2">
    <original>A</original>
    <variation>R</variation>
    <location>
        <position position="4"/>
    </location>
</feature>
<feature type="sequence conflict" description="In Ref. 2; AAA88196." evidence="2" ref="2">
    <original>GIIGLQG</original>
    <variation>ACRVKV</variation>
    <location>
        <begin position="146"/>
        <end position="152"/>
    </location>
</feature>
<sequence length="152" mass="15082">MVKAVAVLSSSEGVSGTIFFSQEGDGPTTVTGNVSGLKPGLHGFHVHALGDTTNGCMSTGPHFNPAGKEHGAPGDDNRHAGDLGNITVGEDGTASFTITDKQIPLTGANSVIGRAVVVHGDPDDLGKGGHELSKSTGNAGGRVACGIIGLQG</sequence>
<comment type="function">
    <text>Destroys radicals which are normally produced within the cells and which are toxic to biological systems.</text>
</comment>
<comment type="catalytic activity">
    <reaction>
        <text>2 superoxide + 2 H(+) = H2O2 + O2</text>
        <dbReference type="Rhea" id="RHEA:20696"/>
        <dbReference type="ChEBI" id="CHEBI:15378"/>
        <dbReference type="ChEBI" id="CHEBI:15379"/>
        <dbReference type="ChEBI" id="CHEBI:16240"/>
        <dbReference type="ChEBI" id="CHEBI:18421"/>
        <dbReference type="EC" id="1.15.1.1"/>
    </reaction>
</comment>
<comment type="cofactor">
    <cofactor evidence="1">
        <name>Cu cation</name>
        <dbReference type="ChEBI" id="CHEBI:23378"/>
    </cofactor>
    <text evidence="1">Binds 1 copper ion per subunit.</text>
</comment>
<comment type="cofactor">
    <cofactor evidence="1">
        <name>Zn(2+)</name>
        <dbReference type="ChEBI" id="CHEBI:29105"/>
    </cofactor>
    <text evidence="1">Binds 1 zinc ion per subunit.</text>
</comment>
<comment type="subunit">
    <text>Homodimer.</text>
</comment>
<comment type="subcellular location">
    <subcellularLocation>
        <location>Cytoplasm</location>
    </subcellularLocation>
</comment>
<comment type="similarity">
    <text evidence="2">Belongs to the Cu-Zn superoxide dismutase family.</text>
</comment>